<name>Y126_METJA</name>
<sequence>MKTLSEIKEILRKHKKELKEKYKVKSIAIFGSYARNEQTETSDIDILIDYYEPISLLKLIELENYLSDLLEIKVDLITKNSIHNPYVKKSIEEDLIYI</sequence>
<dbReference type="EC" id="2.7.7.108" evidence="1"/>
<dbReference type="EMBL" id="L77117">
    <property type="protein sequence ID" value="AAB98106.1"/>
    <property type="molecule type" value="Genomic_DNA"/>
</dbReference>
<dbReference type="RefSeq" id="WP_010869619.1">
    <property type="nucleotide sequence ID" value="NC_000909.1"/>
</dbReference>
<dbReference type="SMR" id="Q57590"/>
<dbReference type="STRING" id="243232.MJ_0126"/>
<dbReference type="PaxDb" id="243232-MJ_0126"/>
<dbReference type="EnsemblBacteria" id="AAB98106">
    <property type="protein sequence ID" value="AAB98106"/>
    <property type="gene ID" value="MJ_0126"/>
</dbReference>
<dbReference type="GeneID" id="1450968"/>
<dbReference type="KEGG" id="mja:MJ_0126"/>
<dbReference type="eggNOG" id="arCOG01206">
    <property type="taxonomic scope" value="Archaea"/>
</dbReference>
<dbReference type="HOGENOM" id="CLU_130257_10_3_2"/>
<dbReference type="InParanoid" id="Q57590"/>
<dbReference type="OrthoDB" id="62697at2157"/>
<dbReference type="PhylomeDB" id="Q57590"/>
<dbReference type="Proteomes" id="UP000000805">
    <property type="component" value="Chromosome"/>
</dbReference>
<dbReference type="GO" id="GO:0005524">
    <property type="term" value="F:ATP binding"/>
    <property type="evidence" value="ECO:0007669"/>
    <property type="project" value="UniProtKB-KW"/>
</dbReference>
<dbReference type="GO" id="GO:0046872">
    <property type="term" value="F:metal ion binding"/>
    <property type="evidence" value="ECO:0007669"/>
    <property type="project" value="UniProtKB-KW"/>
</dbReference>
<dbReference type="GO" id="GO:0016779">
    <property type="term" value="F:nucleotidyltransferase activity"/>
    <property type="evidence" value="ECO:0007669"/>
    <property type="project" value="UniProtKB-KW"/>
</dbReference>
<dbReference type="CDD" id="cd05403">
    <property type="entry name" value="NT_KNTase_like"/>
    <property type="match status" value="1"/>
</dbReference>
<dbReference type="Gene3D" id="3.30.460.10">
    <property type="entry name" value="Beta Polymerase, domain 2"/>
    <property type="match status" value="1"/>
</dbReference>
<dbReference type="InterPro" id="IPR043519">
    <property type="entry name" value="NT_sf"/>
</dbReference>
<dbReference type="InterPro" id="IPR002934">
    <property type="entry name" value="Polymerase_NTP_transf_dom"/>
</dbReference>
<dbReference type="InterPro" id="IPR052038">
    <property type="entry name" value="Type-VII_TA_antitoxin"/>
</dbReference>
<dbReference type="PANTHER" id="PTHR33571:SF19">
    <property type="entry name" value="PROTEIN ADENYLYLTRANSFERASE MJ0128-RELATED"/>
    <property type="match status" value="1"/>
</dbReference>
<dbReference type="PANTHER" id="PTHR33571">
    <property type="entry name" value="SSL8005 PROTEIN"/>
    <property type="match status" value="1"/>
</dbReference>
<dbReference type="Pfam" id="PF01909">
    <property type="entry name" value="NTP_transf_2"/>
    <property type="match status" value="1"/>
</dbReference>
<dbReference type="SUPFAM" id="SSF81301">
    <property type="entry name" value="Nucleotidyltransferase"/>
    <property type="match status" value="1"/>
</dbReference>
<accession>Q57590</accession>
<evidence type="ECO:0000250" key="1">
    <source>
        <dbReference type="UniProtKB" id="A0A0B0QJN8"/>
    </source>
</evidence>
<evidence type="ECO:0000250" key="2">
    <source>
        <dbReference type="UniProtKB" id="Q8ECH7"/>
    </source>
</evidence>
<evidence type="ECO:0000305" key="3"/>
<proteinExistence type="inferred from homology"/>
<gene>
    <name type="ordered locus">MJ0126</name>
</gene>
<keyword id="KW-0067">ATP-binding</keyword>
<keyword id="KW-0460">Magnesium</keyword>
<keyword id="KW-0479">Metal-binding</keyword>
<keyword id="KW-0547">Nucleotide-binding</keyword>
<keyword id="KW-0548">Nucleotidyltransferase</keyword>
<keyword id="KW-1185">Reference proteome</keyword>
<keyword id="KW-1277">Toxin-antitoxin system</keyword>
<keyword id="KW-0808">Transferase</keyword>
<feature type="chain" id="PRO_0000106705" description="Putative protein adenylyltransferase MJ0126">
    <location>
        <begin position="1"/>
        <end position="98"/>
    </location>
</feature>
<feature type="short sequence motif" description="GSX(10)DXD motif" evidence="2">
    <location>
        <begin position="31"/>
        <end position="45"/>
    </location>
</feature>
<feature type="binding site" evidence="2">
    <location>
        <position position="43"/>
    </location>
    <ligand>
        <name>Mg(2+)</name>
        <dbReference type="ChEBI" id="CHEBI:18420"/>
        <label>1</label>
    </ligand>
</feature>
<feature type="binding site" evidence="2">
    <location>
        <position position="43"/>
    </location>
    <ligand>
        <name>Mg(2+)</name>
        <dbReference type="ChEBI" id="CHEBI:18420"/>
        <label>2</label>
    </ligand>
</feature>
<feature type="binding site" evidence="2">
    <location>
        <position position="45"/>
    </location>
    <ligand>
        <name>Mg(2+)</name>
        <dbReference type="ChEBI" id="CHEBI:18420"/>
        <label>1</label>
    </ligand>
</feature>
<feature type="binding site" evidence="2">
    <location>
        <position position="45"/>
    </location>
    <ligand>
        <name>Mg(2+)</name>
        <dbReference type="ChEBI" id="CHEBI:18420"/>
        <label>2</label>
    </ligand>
</feature>
<feature type="binding site" evidence="2">
    <location>
        <position position="75"/>
    </location>
    <ligand>
        <name>Mg(2+)</name>
        <dbReference type="ChEBI" id="CHEBI:18420"/>
        <label>1</label>
    </ligand>
</feature>
<organism>
    <name type="scientific">Methanocaldococcus jannaschii (strain ATCC 43067 / DSM 2661 / JAL-1 / JCM 10045 / NBRC 100440)</name>
    <name type="common">Methanococcus jannaschii</name>
    <dbReference type="NCBI Taxonomy" id="243232"/>
    <lineage>
        <taxon>Archaea</taxon>
        <taxon>Methanobacteriati</taxon>
        <taxon>Methanobacteriota</taxon>
        <taxon>Methanomada group</taxon>
        <taxon>Methanococci</taxon>
        <taxon>Methanococcales</taxon>
        <taxon>Methanocaldococcaceae</taxon>
        <taxon>Methanocaldococcus</taxon>
    </lineage>
</organism>
<comment type="function">
    <text evidence="2">Probable antitoxin component of a putative type VII toxin-antitoxin (TA) system. Neutralizes cognate toxic MJ0125 by di-AMPylation.</text>
</comment>
<comment type="catalytic activity">
    <reaction evidence="2">
        <text>L-tyrosyl-[protein] + ATP = O-(5'-adenylyl)-L-tyrosyl-[protein] + diphosphate</text>
        <dbReference type="Rhea" id="RHEA:54288"/>
        <dbReference type="Rhea" id="RHEA-COMP:10136"/>
        <dbReference type="Rhea" id="RHEA-COMP:13846"/>
        <dbReference type="ChEBI" id="CHEBI:30616"/>
        <dbReference type="ChEBI" id="CHEBI:33019"/>
        <dbReference type="ChEBI" id="CHEBI:46858"/>
        <dbReference type="ChEBI" id="CHEBI:83624"/>
        <dbReference type="EC" id="2.7.7.108"/>
    </reaction>
</comment>
<comment type="catalytic activity">
    <reaction evidence="2">
        <text>O-(5'-adenylyl)-L-tyrosyl-[protein] + ATP = O-[5'-(adenylyl-(5'-&gt;3')-adenylyl)]-L-tyrosyl-[protein] + diphosphate</text>
        <dbReference type="Rhea" id="RHEA:66528"/>
        <dbReference type="Rhea" id="RHEA-COMP:13846"/>
        <dbReference type="Rhea" id="RHEA-COMP:17046"/>
        <dbReference type="ChEBI" id="CHEBI:30616"/>
        <dbReference type="ChEBI" id="CHEBI:33019"/>
        <dbReference type="ChEBI" id="CHEBI:83624"/>
        <dbReference type="ChEBI" id="CHEBI:167160"/>
    </reaction>
</comment>
<comment type="cofactor">
    <cofactor evidence="2">
        <name>Mg(2+)</name>
        <dbReference type="ChEBI" id="CHEBI:18420"/>
    </cofactor>
    <text evidence="2">Binds 2 Mg(2+) ions.</text>
</comment>
<comment type="subunit">
    <text evidence="2">Probably forms a complex with cognate toxin MJ0125.</text>
</comment>
<comment type="similarity">
    <text evidence="3">Belongs to the MntA antitoxin family.</text>
</comment>
<protein>
    <recommendedName>
        <fullName>Putative protein adenylyltransferase MJ0126</fullName>
        <ecNumber evidence="1">2.7.7.108</ecNumber>
    </recommendedName>
    <alternativeName>
        <fullName>Putative antitoxin MJ0126</fullName>
    </alternativeName>
</protein>
<reference key="1">
    <citation type="journal article" date="1996" name="Science">
        <title>Complete genome sequence of the methanogenic archaeon, Methanococcus jannaschii.</title>
        <authorList>
            <person name="Bult C.J."/>
            <person name="White O."/>
            <person name="Olsen G.J."/>
            <person name="Zhou L."/>
            <person name="Fleischmann R.D."/>
            <person name="Sutton G.G."/>
            <person name="Blake J.A."/>
            <person name="FitzGerald L.M."/>
            <person name="Clayton R.A."/>
            <person name="Gocayne J.D."/>
            <person name="Kerlavage A.R."/>
            <person name="Dougherty B.A."/>
            <person name="Tomb J.-F."/>
            <person name="Adams M.D."/>
            <person name="Reich C.I."/>
            <person name="Overbeek R."/>
            <person name="Kirkness E.F."/>
            <person name="Weinstock K.G."/>
            <person name="Merrick J.M."/>
            <person name="Glodek A."/>
            <person name="Scott J.L."/>
            <person name="Geoghagen N.S.M."/>
            <person name="Weidman J.F."/>
            <person name="Fuhrmann J.L."/>
            <person name="Nguyen D."/>
            <person name="Utterback T.R."/>
            <person name="Kelley J.M."/>
            <person name="Peterson J.D."/>
            <person name="Sadow P.W."/>
            <person name="Hanna M.C."/>
            <person name="Cotton M.D."/>
            <person name="Roberts K.M."/>
            <person name="Hurst M.A."/>
            <person name="Kaine B.P."/>
            <person name="Borodovsky M."/>
            <person name="Klenk H.-P."/>
            <person name="Fraser C.M."/>
            <person name="Smith H.O."/>
            <person name="Woese C.R."/>
            <person name="Venter J.C."/>
        </authorList>
    </citation>
    <scope>NUCLEOTIDE SEQUENCE [LARGE SCALE GENOMIC DNA]</scope>
    <source>
        <strain>ATCC 43067 / DSM 2661 / JAL-1 / JCM 10045 / NBRC 100440</strain>
    </source>
</reference>